<reference key="1">
    <citation type="journal article" date="2008" name="BMC Genomics">
        <title>Comparative genomic analysis of the gut bacterium Bifidobacterium longum reveals loci susceptible to deletion during pure culture growth.</title>
        <authorList>
            <person name="Lee J.H."/>
            <person name="Karamychev V.N."/>
            <person name="Kozyavkin S.A."/>
            <person name="Mills D."/>
            <person name="Pavlov A.R."/>
            <person name="Pavlova N.V."/>
            <person name="Polouchine N.N."/>
            <person name="Richardson P.M."/>
            <person name="Shakhova V.V."/>
            <person name="Slesarev A.I."/>
            <person name="Weimer B."/>
            <person name="O'Sullivan D.J."/>
        </authorList>
    </citation>
    <scope>NUCLEOTIDE SEQUENCE [LARGE SCALE GENOMIC DNA]</scope>
    <source>
        <strain>DJO10A</strain>
    </source>
</reference>
<protein>
    <recommendedName>
        <fullName evidence="1">Bifunctional protein GlmU</fullName>
    </recommendedName>
    <domain>
        <recommendedName>
            <fullName evidence="1">UDP-N-acetylglucosamine pyrophosphorylase</fullName>
            <ecNumber evidence="1">2.7.7.23</ecNumber>
        </recommendedName>
        <alternativeName>
            <fullName evidence="1">N-acetylglucosamine-1-phosphate uridyltransferase</fullName>
        </alternativeName>
    </domain>
    <domain>
        <recommendedName>
            <fullName evidence="1">Glucosamine-1-phosphate N-acetyltransferase</fullName>
            <ecNumber evidence="1">2.3.1.157</ecNumber>
        </recommendedName>
    </domain>
</protein>
<feature type="chain" id="PRO_1000186406" description="Bifunctional protein GlmU">
    <location>
        <begin position="1"/>
        <end position="460"/>
    </location>
</feature>
<feature type="region of interest" description="Pyrophosphorylase" evidence="1">
    <location>
        <begin position="1"/>
        <end position="235"/>
    </location>
</feature>
<feature type="region of interest" description="Linker" evidence="1">
    <location>
        <begin position="236"/>
        <end position="256"/>
    </location>
</feature>
<feature type="region of interest" description="N-acetyltransferase" evidence="1">
    <location>
        <begin position="257"/>
        <end position="460"/>
    </location>
</feature>
<feature type="active site" description="Proton acceptor" evidence="1">
    <location>
        <position position="368"/>
    </location>
</feature>
<feature type="binding site" evidence="1">
    <location>
        <begin position="9"/>
        <end position="12"/>
    </location>
    <ligand>
        <name>UDP-N-acetyl-alpha-D-glucosamine</name>
        <dbReference type="ChEBI" id="CHEBI:57705"/>
    </ligand>
</feature>
<feature type="binding site" evidence="1">
    <location>
        <position position="23"/>
    </location>
    <ligand>
        <name>UDP-N-acetyl-alpha-D-glucosamine</name>
        <dbReference type="ChEBI" id="CHEBI:57705"/>
    </ligand>
</feature>
<feature type="binding site" evidence="1">
    <location>
        <position position="76"/>
    </location>
    <ligand>
        <name>UDP-N-acetyl-alpha-D-glucosamine</name>
        <dbReference type="ChEBI" id="CHEBI:57705"/>
    </ligand>
</feature>
<feature type="binding site" evidence="1">
    <location>
        <begin position="81"/>
        <end position="82"/>
    </location>
    <ligand>
        <name>UDP-N-acetyl-alpha-D-glucosamine</name>
        <dbReference type="ChEBI" id="CHEBI:57705"/>
    </ligand>
</feature>
<feature type="binding site" evidence="1">
    <location>
        <position position="109"/>
    </location>
    <ligand>
        <name>Mg(2+)</name>
        <dbReference type="ChEBI" id="CHEBI:18420"/>
    </ligand>
</feature>
<feature type="binding site" evidence="1">
    <location>
        <position position="146"/>
    </location>
    <ligand>
        <name>UDP-N-acetyl-alpha-D-glucosamine</name>
        <dbReference type="ChEBI" id="CHEBI:57705"/>
    </ligand>
</feature>
<feature type="binding site" evidence="1">
    <location>
        <position position="161"/>
    </location>
    <ligand>
        <name>UDP-N-acetyl-alpha-D-glucosamine</name>
        <dbReference type="ChEBI" id="CHEBI:57705"/>
    </ligand>
</feature>
<feature type="binding site" evidence="1">
    <location>
        <position position="176"/>
    </location>
    <ligand>
        <name>UDP-N-acetyl-alpha-D-glucosamine</name>
        <dbReference type="ChEBI" id="CHEBI:57705"/>
    </ligand>
</feature>
<feature type="binding site" evidence="1">
    <location>
        <position position="233"/>
    </location>
    <ligand>
        <name>Mg(2+)</name>
        <dbReference type="ChEBI" id="CHEBI:18420"/>
    </ligand>
</feature>
<feature type="binding site" evidence="1">
    <location>
        <position position="233"/>
    </location>
    <ligand>
        <name>UDP-N-acetyl-alpha-D-glucosamine</name>
        <dbReference type="ChEBI" id="CHEBI:57705"/>
    </ligand>
</feature>
<feature type="binding site" evidence="1">
    <location>
        <position position="338"/>
    </location>
    <ligand>
        <name>UDP-N-acetyl-alpha-D-glucosamine</name>
        <dbReference type="ChEBI" id="CHEBI:57705"/>
    </ligand>
</feature>
<feature type="binding site" evidence="1">
    <location>
        <position position="356"/>
    </location>
    <ligand>
        <name>UDP-N-acetyl-alpha-D-glucosamine</name>
        <dbReference type="ChEBI" id="CHEBI:57705"/>
    </ligand>
</feature>
<feature type="binding site" evidence="1">
    <location>
        <position position="371"/>
    </location>
    <ligand>
        <name>UDP-N-acetyl-alpha-D-glucosamine</name>
        <dbReference type="ChEBI" id="CHEBI:57705"/>
    </ligand>
</feature>
<feature type="binding site" evidence="1">
    <location>
        <position position="382"/>
    </location>
    <ligand>
        <name>UDP-N-acetyl-alpha-D-glucosamine</name>
        <dbReference type="ChEBI" id="CHEBI:57705"/>
    </ligand>
</feature>
<feature type="binding site" evidence="1">
    <location>
        <begin position="391"/>
        <end position="392"/>
    </location>
    <ligand>
        <name>acetyl-CoA</name>
        <dbReference type="ChEBI" id="CHEBI:57288"/>
    </ligand>
</feature>
<feature type="binding site" evidence="1">
    <location>
        <position position="428"/>
    </location>
    <ligand>
        <name>acetyl-CoA</name>
        <dbReference type="ChEBI" id="CHEBI:57288"/>
    </ligand>
</feature>
<comment type="function">
    <text evidence="1">Catalyzes the last two sequential reactions in the de novo biosynthetic pathway for UDP-N-acetylglucosamine (UDP-GlcNAc). The C-terminal domain catalyzes the transfer of acetyl group from acetyl coenzyme A to glucosamine-1-phosphate (GlcN-1-P) to produce N-acetylglucosamine-1-phosphate (GlcNAc-1-P), which is converted into UDP-GlcNAc by the transfer of uridine 5-monophosphate (from uridine 5-triphosphate), a reaction catalyzed by the N-terminal domain.</text>
</comment>
<comment type="catalytic activity">
    <reaction evidence="1">
        <text>alpha-D-glucosamine 1-phosphate + acetyl-CoA = N-acetyl-alpha-D-glucosamine 1-phosphate + CoA + H(+)</text>
        <dbReference type="Rhea" id="RHEA:13725"/>
        <dbReference type="ChEBI" id="CHEBI:15378"/>
        <dbReference type="ChEBI" id="CHEBI:57287"/>
        <dbReference type="ChEBI" id="CHEBI:57288"/>
        <dbReference type="ChEBI" id="CHEBI:57776"/>
        <dbReference type="ChEBI" id="CHEBI:58516"/>
        <dbReference type="EC" id="2.3.1.157"/>
    </reaction>
</comment>
<comment type="catalytic activity">
    <reaction evidence="1">
        <text>N-acetyl-alpha-D-glucosamine 1-phosphate + UTP + H(+) = UDP-N-acetyl-alpha-D-glucosamine + diphosphate</text>
        <dbReference type="Rhea" id="RHEA:13509"/>
        <dbReference type="ChEBI" id="CHEBI:15378"/>
        <dbReference type="ChEBI" id="CHEBI:33019"/>
        <dbReference type="ChEBI" id="CHEBI:46398"/>
        <dbReference type="ChEBI" id="CHEBI:57705"/>
        <dbReference type="ChEBI" id="CHEBI:57776"/>
        <dbReference type="EC" id="2.7.7.23"/>
    </reaction>
</comment>
<comment type="cofactor">
    <cofactor evidence="1">
        <name>Mg(2+)</name>
        <dbReference type="ChEBI" id="CHEBI:18420"/>
    </cofactor>
    <text evidence="1">Binds 1 Mg(2+) ion per subunit.</text>
</comment>
<comment type="pathway">
    <text evidence="1">Nucleotide-sugar biosynthesis; UDP-N-acetyl-alpha-D-glucosamine biosynthesis; N-acetyl-alpha-D-glucosamine 1-phosphate from alpha-D-glucosamine 6-phosphate (route II): step 2/2.</text>
</comment>
<comment type="pathway">
    <text evidence="1">Nucleotide-sugar biosynthesis; UDP-N-acetyl-alpha-D-glucosamine biosynthesis; UDP-N-acetyl-alpha-D-glucosamine from N-acetyl-alpha-D-glucosamine 1-phosphate: step 1/1.</text>
</comment>
<comment type="pathway">
    <text evidence="1">Bacterial outer membrane biogenesis; LPS lipid A biosynthesis.</text>
</comment>
<comment type="subunit">
    <text evidence="1">Homotrimer.</text>
</comment>
<comment type="subcellular location">
    <subcellularLocation>
        <location evidence="1">Cytoplasm</location>
    </subcellularLocation>
</comment>
<comment type="similarity">
    <text evidence="1">In the N-terminal section; belongs to the N-acetylglucosamine-1-phosphate uridyltransferase family.</text>
</comment>
<comment type="similarity">
    <text evidence="1">In the C-terminal section; belongs to the transferase hexapeptide repeat family.</text>
</comment>
<accession>B3DSP5</accession>
<proteinExistence type="inferred from homology"/>
<evidence type="ECO:0000255" key="1">
    <source>
        <dbReference type="HAMAP-Rule" id="MF_01631"/>
    </source>
</evidence>
<keyword id="KW-0012">Acyltransferase</keyword>
<keyword id="KW-0133">Cell shape</keyword>
<keyword id="KW-0961">Cell wall biogenesis/degradation</keyword>
<keyword id="KW-0963">Cytoplasm</keyword>
<keyword id="KW-0460">Magnesium</keyword>
<keyword id="KW-0479">Metal-binding</keyword>
<keyword id="KW-0511">Multifunctional enzyme</keyword>
<keyword id="KW-0548">Nucleotidyltransferase</keyword>
<keyword id="KW-0573">Peptidoglycan synthesis</keyword>
<keyword id="KW-0677">Repeat</keyword>
<keyword id="KW-0808">Transferase</keyword>
<dbReference type="EC" id="2.7.7.23" evidence="1"/>
<dbReference type="EC" id="2.3.1.157" evidence="1"/>
<dbReference type="EMBL" id="CP000605">
    <property type="protein sequence ID" value="ACD98164.1"/>
    <property type="molecule type" value="Genomic_DNA"/>
</dbReference>
<dbReference type="RefSeq" id="WP_010081473.1">
    <property type="nucleotide sequence ID" value="NZ_AABM02000017.1"/>
</dbReference>
<dbReference type="SMR" id="B3DSP5"/>
<dbReference type="KEGG" id="blj:BLD_0718"/>
<dbReference type="HOGENOM" id="CLU_029499_15_2_11"/>
<dbReference type="UniPathway" id="UPA00113">
    <property type="reaction ID" value="UER00532"/>
</dbReference>
<dbReference type="UniPathway" id="UPA00113">
    <property type="reaction ID" value="UER00533"/>
</dbReference>
<dbReference type="UniPathway" id="UPA00973"/>
<dbReference type="Proteomes" id="UP000002419">
    <property type="component" value="Chromosome"/>
</dbReference>
<dbReference type="GO" id="GO:0005737">
    <property type="term" value="C:cytoplasm"/>
    <property type="evidence" value="ECO:0007669"/>
    <property type="project" value="UniProtKB-SubCell"/>
</dbReference>
<dbReference type="GO" id="GO:0016020">
    <property type="term" value="C:membrane"/>
    <property type="evidence" value="ECO:0007669"/>
    <property type="project" value="GOC"/>
</dbReference>
<dbReference type="GO" id="GO:0019134">
    <property type="term" value="F:glucosamine-1-phosphate N-acetyltransferase activity"/>
    <property type="evidence" value="ECO:0007669"/>
    <property type="project" value="UniProtKB-UniRule"/>
</dbReference>
<dbReference type="GO" id="GO:0000287">
    <property type="term" value="F:magnesium ion binding"/>
    <property type="evidence" value="ECO:0007669"/>
    <property type="project" value="UniProtKB-UniRule"/>
</dbReference>
<dbReference type="GO" id="GO:0003977">
    <property type="term" value="F:UDP-N-acetylglucosamine diphosphorylase activity"/>
    <property type="evidence" value="ECO:0007669"/>
    <property type="project" value="UniProtKB-UniRule"/>
</dbReference>
<dbReference type="GO" id="GO:0000902">
    <property type="term" value="P:cell morphogenesis"/>
    <property type="evidence" value="ECO:0007669"/>
    <property type="project" value="UniProtKB-UniRule"/>
</dbReference>
<dbReference type="GO" id="GO:0071555">
    <property type="term" value="P:cell wall organization"/>
    <property type="evidence" value="ECO:0007669"/>
    <property type="project" value="UniProtKB-KW"/>
</dbReference>
<dbReference type="GO" id="GO:0009245">
    <property type="term" value="P:lipid A biosynthetic process"/>
    <property type="evidence" value="ECO:0007669"/>
    <property type="project" value="UniProtKB-UniRule"/>
</dbReference>
<dbReference type="GO" id="GO:0009252">
    <property type="term" value="P:peptidoglycan biosynthetic process"/>
    <property type="evidence" value="ECO:0007669"/>
    <property type="project" value="UniProtKB-UniRule"/>
</dbReference>
<dbReference type="GO" id="GO:0008360">
    <property type="term" value="P:regulation of cell shape"/>
    <property type="evidence" value="ECO:0007669"/>
    <property type="project" value="UniProtKB-KW"/>
</dbReference>
<dbReference type="GO" id="GO:0006048">
    <property type="term" value="P:UDP-N-acetylglucosamine biosynthetic process"/>
    <property type="evidence" value="ECO:0007669"/>
    <property type="project" value="UniProtKB-UniPathway"/>
</dbReference>
<dbReference type="CDD" id="cd02540">
    <property type="entry name" value="GT2_GlmU_N_bac"/>
    <property type="match status" value="1"/>
</dbReference>
<dbReference type="CDD" id="cd03353">
    <property type="entry name" value="LbH_GlmU_C"/>
    <property type="match status" value="1"/>
</dbReference>
<dbReference type="Gene3D" id="2.160.10.10">
    <property type="entry name" value="Hexapeptide repeat proteins"/>
    <property type="match status" value="1"/>
</dbReference>
<dbReference type="Gene3D" id="3.90.550.10">
    <property type="entry name" value="Spore Coat Polysaccharide Biosynthesis Protein SpsA, Chain A"/>
    <property type="match status" value="1"/>
</dbReference>
<dbReference type="HAMAP" id="MF_01631">
    <property type="entry name" value="GlmU"/>
    <property type="match status" value="1"/>
</dbReference>
<dbReference type="InterPro" id="IPR005882">
    <property type="entry name" value="Bifunctional_GlmU"/>
</dbReference>
<dbReference type="InterPro" id="IPR050065">
    <property type="entry name" value="GlmU-like"/>
</dbReference>
<dbReference type="InterPro" id="IPR038009">
    <property type="entry name" value="GlmU_C_LbH"/>
</dbReference>
<dbReference type="InterPro" id="IPR025877">
    <property type="entry name" value="MobA-like_NTP_Trfase"/>
</dbReference>
<dbReference type="InterPro" id="IPR029044">
    <property type="entry name" value="Nucleotide-diphossugar_trans"/>
</dbReference>
<dbReference type="InterPro" id="IPR011004">
    <property type="entry name" value="Trimer_LpxA-like_sf"/>
</dbReference>
<dbReference type="NCBIfam" id="TIGR01173">
    <property type="entry name" value="glmU"/>
    <property type="match status" value="1"/>
</dbReference>
<dbReference type="NCBIfam" id="NF010932">
    <property type="entry name" value="PRK14352.1"/>
    <property type="match status" value="1"/>
</dbReference>
<dbReference type="PANTHER" id="PTHR43584:SF3">
    <property type="entry name" value="BIFUNCTIONAL PROTEIN GLMU"/>
    <property type="match status" value="1"/>
</dbReference>
<dbReference type="PANTHER" id="PTHR43584">
    <property type="entry name" value="NUCLEOTIDYL TRANSFERASE"/>
    <property type="match status" value="1"/>
</dbReference>
<dbReference type="Pfam" id="PF12804">
    <property type="entry name" value="NTP_transf_3"/>
    <property type="match status" value="1"/>
</dbReference>
<dbReference type="SUPFAM" id="SSF53448">
    <property type="entry name" value="Nucleotide-diphospho-sugar transferases"/>
    <property type="match status" value="1"/>
</dbReference>
<dbReference type="SUPFAM" id="SSF51161">
    <property type="entry name" value="Trimeric LpxA-like enzymes"/>
    <property type="match status" value="1"/>
</dbReference>
<sequence>MALSAAIVLAAGEGTRMRSNKPKVLHAFAGKTFLNRVMDSVAVLNPDTLAVVVHFQAERVAEAARSYDEQVTIVNQDDIPGTGRAVQCAMAQLTEAGKVDGPVLIAASDMPLLDSETLHRLVEFHTASGNGATVLTTILDDPTGYGRIIRDREGNVLRIVEQKDANRSELAVQEVNTSVYVFEASVLTEAIAGLKSNNAQGEFYLTDALETAKAAGKVGAFAAPDPLTVEGVNDRVQLAALSKTYNRRVCERWMRDGVTILDPETTWIEDDVQIGRDATILPGSFLQGHTVVGEDAIVGPYTTLIDTTVDEGAVVERSRVQESHIGARTNIGPWTYLRPGNEFGEDAKAGAFVEMKKAHIGNGTKVPHLSYVGDAQLGDHTNIGGGTITANYDGVHKNSTTIGSGCHVGAGNLFVAPVEVGNNVTTGAGSVVRHAVPSDTMVYSENTQHNVEGWKPAWER</sequence>
<gene>
    <name evidence="1" type="primary">glmU</name>
    <name type="ordered locus">BLD_0718</name>
</gene>
<name>GLMU_BIFLD</name>
<organism>
    <name type="scientific">Bifidobacterium longum (strain DJO10A)</name>
    <dbReference type="NCBI Taxonomy" id="205913"/>
    <lineage>
        <taxon>Bacteria</taxon>
        <taxon>Bacillati</taxon>
        <taxon>Actinomycetota</taxon>
        <taxon>Actinomycetes</taxon>
        <taxon>Bifidobacteriales</taxon>
        <taxon>Bifidobacteriaceae</taxon>
        <taxon>Bifidobacterium</taxon>
    </lineage>
</organism>